<protein>
    <recommendedName>
        <fullName evidence="1">Bifunctional protein GlmU</fullName>
    </recommendedName>
    <domain>
        <recommendedName>
            <fullName evidence="1">UDP-N-acetylglucosamine pyrophosphorylase</fullName>
            <ecNumber evidence="1">2.7.7.23</ecNumber>
        </recommendedName>
        <alternativeName>
            <fullName evidence="1">N-acetylglucosamine-1-phosphate uridyltransferase</fullName>
        </alternativeName>
    </domain>
    <domain>
        <recommendedName>
            <fullName evidence="1">Glucosamine-1-phosphate N-acetyltransferase</fullName>
            <ecNumber evidence="1">2.3.1.157</ecNumber>
        </recommendedName>
    </domain>
</protein>
<evidence type="ECO:0000255" key="1">
    <source>
        <dbReference type="HAMAP-Rule" id="MF_01631"/>
    </source>
</evidence>
<comment type="function">
    <text evidence="1">Catalyzes the last two sequential reactions in the de novo biosynthetic pathway for UDP-N-acetylglucosamine (UDP-GlcNAc). The C-terminal domain catalyzes the transfer of acetyl group from acetyl coenzyme A to glucosamine-1-phosphate (GlcN-1-P) to produce N-acetylglucosamine-1-phosphate (GlcNAc-1-P), which is converted into UDP-GlcNAc by the transfer of uridine 5-monophosphate (from uridine 5-triphosphate), a reaction catalyzed by the N-terminal domain.</text>
</comment>
<comment type="catalytic activity">
    <reaction evidence="1">
        <text>alpha-D-glucosamine 1-phosphate + acetyl-CoA = N-acetyl-alpha-D-glucosamine 1-phosphate + CoA + H(+)</text>
        <dbReference type="Rhea" id="RHEA:13725"/>
        <dbReference type="ChEBI" id="CHEBI:15378"/>
        <dbReference type="ChEBI" id="CHEBI:57287"/>
        <dbReference type="ChEBI" id="CHEBI:57288"/>
        <dbReference type="ChEBI" id="CHEBI:57776"/>
        <dbReference type="ChEBI" id="CHEBI:58516"/>
        <dbReference type="EC" id="2.3.1.157"/>
    </reaction>
</comment>
<comment type="catalytic activity">
    <reaction evidence="1">
        <text>N-acetyl-alpha-D-glucosamine 1-phosphate + UTP + H(+) = UDP-N-acetyl-alpha-D-glucosamine + diphosphate</text>
        <dbReference type="Rhea" id="RHEA:13509"/>
        <dbReference type="ChEBI" id="CHEBI:15378"/>
        <dbReference type="ChEBI" id="CHEBI:33019"/>
        <dbReference type="ChEBI" id="CHEBI:46398"/>
        <dbReference type="ChEBI" id="CHEBI:57705"/>
        <dbReference type="ChEBI" id="CHEBI:57776"/>
        <dbReference type="EC" id="2.7.7.23"/>
    </reaction>
</comment>
<comment type="cofactor">
    <cofactor evidence="1">
        <name>Mg(2+)</name>
        <dbReference type="ChEBI" id="CHEBI:18420"/>
    </cofactor>
    <text evidence="1">Binds 1 Mg(2+) ion per subunit.</text>
</comment>
<comment type="pathway">
    <text evidence="1">Nucleotide-sugar biosynthesis; UDP-N-acetyl-alpha-D-glucosamine biosynthesis; N-acetyl-alpha-D-glucosamine 1-phosphate from alpha-D-glucosamine 6-phosphate (route II): step 2/2.</text>
</comment>
<comment type="pathway">
    <text evidence="1">Nucleotide-sugar biosynthesis; UDP-N-acetyl-alpha-D-glucosamine biosynthesis; UDP-N-acetyl-alpha-D-glucosamine from N-acetyl-alpha-D-glucosamine 1-phosphate: step 1/1.</text>
</comment>
<comment type="pathway">
    <text evidence="1">Bacterial outer membrane biogenesis; LPS lipid A biosynthesis.</text>
</comment>
<comment type="subunit">
    <text evidence="1">Homotrimer.</text>
</comment>
<comment type="subcellular location">
    <subcellularLocation>
        <location evidence="1">Cytoplasm</location>
    </subcellularLocation>
</comment>
<comment type="similarity">
    <text evidence="1">In the N-terminal section; belongs to the N-acetylglucosamine-1-phosphate uridyltransferase family.</text>
</comment>
<comment type="similarity">
    <text evidence="1">In the C-terminal section; belongs to the transferase hexapeptide repeat family.</text>
</comment>
<dbReference type="EC" id="2.7.7.23" evidence="1"/>
<dbReference type="EC" id="2.3.1.157" evidence="1"/>
<dbReference type="EMBL" id="AP008232">
    <property type="protein sequence ID" value="BAE75691.1"/>
    <property type="molecule type" value="Genomic_DNA"/>
</dbReference>
<dbReference type="RefSeq" id="WP_011412221.1">
    <property type="nucleotide sequence ID" value="NC_007712.1"/>
</dbReference>
<dbReference type="SMR" id="Q2NQ84"/>
<dbReference type="STRING" id="343509.SG2416"/>
<dbReference type="KEGG" id="sgl:SG2416"/>
<dbReference type="eggNOG" id="COG1207">
    <property type="taxonomic scope" value="Bacteria"/>
</dbReference>
<dbReference type="HOGENOM" id="CLU_029499_15_2_6"/>
<dbReference type="OrthoDB" id="9775031at2"/>
<dbReference type="BioCyc" id="SGLO343509:SGP1_RS21895-MONOMER"/>
<dbReference type="UniPathway" id="UPA00113">
    <property type="reaction ID" value="UER00532"/>
</dbReference>
<dbReference type="UniPathway" id="UPA00113">
    <property type="reaction ID" value="UER00533"/>
</dbReference>
<dbReference type="UniPathway" id="UPA00973"/>
<dbReference type="Proteomes" id="UP000001932">
    <property type="component" value="Chromosome"/>
</dbReference>
<dbReference type="GO" id="GO:0005737">
    <property type="term" value="C:cytoplasm"/>
    <property type="evidence" value="ECO:0007669"/>
    <property type="project" value="UniProtKB-SubCell"/>
</dbReference>
<dbReference type="GO" id="GO:0016020">
    <property type="term" value="C:membrane"/>
    <property type="evidence" value="ECO:0007669"/>
    <property type="project" value="GOC"/>
</dbReference>
<dbReference type="GO" id="GO:0019134">
    <property type="term" value="F:glucosamine-1-phosphate N-acetyltransferase activity"/>
    <property type="evidence" value="ECO:0007669"/>
    <property type="project" value="UniProtKB-UniRule"/>
</dbReference>
<dbReference type="GO" id="GO:0000287">
    <property type="term" value="F:magnesium ion binding"/>
    <property type="evidence" value="ECO:0007669"/>
    <property type="project" value="UniProtKB-UniRule"/>
</dbReference>
<dbReference type="GO" id="GO:0003977">
    <property type="term" value="F:UDP-N-acetylglucosamine diphosphorylase activity"/>
    <property type="evidence" value="ECO:0007669"/>
    <property type="project" value="UniProtKB-UniRule"/>
</dbReference>
<dbReference type="GO" id="GO:0000902">
    <property type="term" value="P:cell morphogenesis"/>
    <property type="evidence" value="ECO:0007669"/>
    <property type="project" value="UniProtKB-UniRule"/>
</dbReference>
<dbReference type="GO" id="GO:0071555">
    <property type="term" value="P:cell wall organization"/>
    <property type="evidence" value="ECO:0007669"/>
    <property type="project" value="UniProtKB-KW"/>
</dbReference>
<dbReference type="GO" id="GO:0009245">
    <property type="term" value="P:lipid A biosynthetic process"/>
    <property type="evidence" value="ECO:0007669"/>
    <property type="project" value="UniProtKB-UniRule"/>
</dbReference>
<dbReference type="GO" id="GO:0009252">
    <property type="term" value="P:peptidoglycan biosynthetic process"/>
    <property type="evidence" value="ECO:0007669"/>
    <property type="project" value="UniProtKB-UniRule"/>
</dbReference>
<dbReference type="GO" id="GO:0008360">
    <property type="term" value="P:regulation of cell shape"/>
    <property type="evidence" value="ECO:0007669"/>
    <property type="project" value="UniProtKB-KW"/>
</dbReference>
<dbReference type="GO" id="GO:0006048">
    <property type="term" value="P:UDP-N-acetylglucosamine biosynthetic process"/>
    <property type="evidence" value="ECO:0007669"/>
    <property type="project" value="UniProtKB-UniPathway"/>
</dbReference>
<dbReference type="CDD" id="cd02540">
    <property type="entry name" value="GT2_GlmU_N_bac"/>
    <property type="match status" value="1"/>
</dbReference>
<dbReference type="CDD" id="cd03353">
    <property type="entry name" value="LbH_GlmU_C"/>
    <property type="match status" value="1"/>
</dbReference>
<dbReference type="FunFam" id="3.90.550.10:FF:000006">
    <property type="entry name" value="Bifunctional protein GlmU"/>
    <property type="match status" value="1"/>
</dbReference>
<dbReference type="Gene3D" id="2.160.10.10">
    <property type="entry name" value="Hexapeptide repeat proteins"/>
    <property type="match status" value="1"/>
</dbReference>
<dbReference type="Gene3D" id="3.90.550.10">
    <property type="entry name" value="Spore Coat Polysaccharide Biosynthesis Protein SpsA, Chain A"/>
    <property type="match status" value="1"/>
</dbReference>
<dbReference type="HAMAP" id="MF_01631">
    <property type="entry name" value="GlmU"/>
    <property type="match status" value="1"/>
</dbReference>
<dbReference type="InterPro" id="IPR005882">
    <property type="entry name" value="Bifunctional_GlmU"/>
</dbReference>
<dbReference type="InterPro" id="IPR050065">
    <property type="entry name" value="GlmU-like"/>
</dbReference>
<dbReference type="InterPro" id="IPR038009">
    <property type="entry name" value="GlmU_C_LbH"/>
</dbReference>
<dbReference type="InterPro" id="IPR001451">
    <property type="entry name" value="Hexapep"/>
</dbReference>
<dbReference type="InterPro" id="IPR018357">
    <property type="entry name" value="Hexapep_transf_CS"/>
</dbReference>
<dbReference type="InterPro" id="IPR025877">
    <property type="entry name" value="MobA-like_NTP_Trfase"/>
</dbReference>
<dbReference type="InterPro" id="IPR029044">
    <property type="entry name" value="Nucleotide-diphossugar_trans"/>
</dbReference>
<dbReference type="InterPro" id="IPR011004">
    <property type="entry name" value="Trimer_LpxA-like_sf"/>
</dbReference>
<dbReference type="NCBIfam" id="TIGR01173">
    <property type="entry name" value="glmU"/>
    <property type="match status" value="1"/>
</dbReference>
<dbReference type="NCBIfam" id="NF006986">
    <property type="entry name" value="PRK09451.1"/>
    <property type="match status" value="1"/>
</dbReference>
<dbReference type="PANTHER" id="PTHR43584:SF3">
    <property type="entry name" value="BIFUNCTIONAL PROTEIN GLMU"/>
    <property type="match status" value="1"/>
</dbReference>
<dbReference type="PANTHER" id="PTHR43584">
    <property type="entry name" value="NUCLEOTIDYL TRANSFERASE"/>
    <property type="match status" value="1"/>
</dbReference>
<dbReference type="Pfam" id="PF00132">
    <property type="entry name" value="Hexapep"/>
    <property type="match status" value="2"/>
</dbReference>
<dbReference type="Pfam" id="PF12804">
    <property type="entry name" value="NTP_transf_3"/>
    <property type="match status" value="1"/>
</dbReference>
<dbReference type="SUPFAM" id="SSF53448">
    <property type="entry name" value="Nucleotide-diphospho-sugar transferases"/>
    <property type="match status" value="1"/>
</dbReference>
<dbReference type="SUPFAM" id="SSF51161">
    <property type="entry name" value="Trimeric LpxA-like enzymes"/>
    <property type="match status" value="1"/>
</dbReference>
<dbReference type="PROSITE" id="PS00101">
    <property type="entry name" value="HEXAPEP_TRANSFERASES"/>
    <property type="match status" value="1"/>
</dbReference>
<reference key="1">
    <citation type="journal article" date="2006" name="Genome Res.">
        <title>Massive genome erosion and functional adaptations provide insights into the symbiotic lifestyle of Sodalis glossinidius in the tsetse host.</title>
        <authorList>
            <person name="Toh H."/>
            <person name="Weiss B.L."/>
            <person name="Perkin S.A.H."/>
            <person name="Yamashita A."/>
            <person name="Oshima K."/>
            <person name="Hattori M."/>
            <person name="Aksoy S."/>
        </authorList>
    </citation>
    <scope>NUCLEOTIDE SEQUENCE [LARGE SCALE GENOMIC DNA]</scope>
    <source>
        <strain>morsitans</strain>
    </source>
</reference>
<sequence length="458" mass="49841">MSNRALSVVVLAAGKGSRMFSTLPKVLHPLAGKAMVQHVIDTAMRLGASRIHLVYGHGGELLRERLARQYAPLNWVLQAEQRGTGHAVQQTLTCLRDEEDVLILYGDVPLISPDTLQCLLAARPQGGIGLLTVTLDNPEGYGRIVRLNGEVAGIVEQKDASEQQRQIKEINTGILVAGGEDIKRWLGQLTNKNAQGEFYLTDIIAMAWHEGRKINAVQPTRQTEVEGVNNRLQLARLERLFQREQAERLLLAGVMLSDPDRFDLRGEFRHGQDVSIDTNVILEGQVTLGDRVIIGTGCVLKNVVIGDDVIISPYTVIEDARVAARSTLGPFARLRPGSELEEDAHVGNFVEMKQARLGKGSKAGHLSYLGDAEIGAQVNIGAGTITCNYDGANKHKTHIGDDVFVGSDSQLVAPVTIGRGATIGAGTTVTRDVAEGEMIISRIRQFPLANWTRPVKKK</sequence>
<organism>
    <name type="scientific">Sodalis glossinidius (strain morsitans)</name>
    <dbReference type="NCBI Taxonomy" id="343509"/>
    <lineage>
        <taxon>Bacteria</taxon>
        <taxon>Pseudomonadati</taxon>
        <taxon>Pseudomonadota</taxon>
        <taxon>Gammaproteobacteria</taxon>
        <taxon>Enterobacterales</taxon>
        <taxon>Bruguierivoracaceae</taxon>
        <taxon>Sodalis</taxon>
    </lineage>
</organism>
<name>GLMU_SODGM</name>
<gene>
    <name evidence="1" type="primary">glmU</name>
    <name type="ordered locus">SG2416</name>
</gene>
<keyword id="KW-0012">Acyltransferase</keyword>
<keyword id="KW-0133">Cell shape</keyword>
<keyword id="KW-0961">Cell wall biogenesis/degradation</keyword>
<keyword id="KW-0963">Cytoplasm</keyword>
<keyword id="KW-0460">Magnesium</keyword>
<keyword id="KW-0479">Metal-binding</keyword>
<keyword id="KW-0511">Multifunctional enzyme</keyword>
<keyword id="KW-0548">Nucleotidyltransferase</keyword>
<keyword id="KW-0573">Peptidoglycan synthesis</keyword>
<keyword id="KW-0677">Repeat</keyword>
<keyword id="KW-0808">Transferase</keyword>
<feature type="chain" id="PRO_0000244309" description="Bifunctional protein GlmU">
    <location>
        <begin position="1"/>
        <end position="458"/>
    </location>
</feature>
<feature type="region of interest" description="Pyrophosphorylase" evidence="1">
    <location>
        <begin position="1"/>
        <end position="231"/>
    </location>
</feature>
<feature type="region of interest" description="Linker" evidence="1">
    <location>
        <begin position="232"/>
        <end position="252"/>
    </location>
</feature>
<feature type="region of interest" description="N-acetyltransferase" evidence="1">
    <location>
        <begin position="253"/>
        <end position="458"/>
    </location>
</feature>
<feature type="active site" description="Proton acceptor" evidence="1">
    <location>
        <position position="365"/>
    </location>
</feature>
<feature type="binding site" evidence="1">
    <location>
        <begin position="11"/>
        <end position="14"/>
    </location>
    <ligand>
        <name>UDP-N-acetyl-alpha-D-glucosamine</name>
        <dbReference type="ChEBI" id="CHEBI:57705"/>
    </ligand>
</feature>
<feature type="binding site" evidence="1">
    <location>
        <position position="25"/>
    </location>
    <ligand>
        <name>UDP-N-acetyl-alpha-D-glucosamine</name>
        <dbReference type="ChEBI" id="CHEBI:57705"/>
    </ligand>
</feature>
<feature type="binding site" evidence="1">
    <location>
        <position position="78"/>
    </location>
    <ligand>
        <name>UDP-N-acetyl-alpha-D-glucosamine</name>
        <dbReference type="ChEBI" id="CHEBI:57705"/>
    </ligand>
</feature>
<feature type="binding site" evidence="1">
    <location>
        <begin position="83"/>
        <end position="84"/>
    </location>
    <ligand>
        <name>UDP-N-acetyl-alpha-D-glucosamine</name>
        <dbReference type="ChEBI" id="CHEBI:57705"/>
    </ligand>
</feature>
<feature type="binding site" evidence="1">
    <location>
        <begin position="105"/>
        <end position="107"/>
    </location>
    <ligand>
        <name>UDP-N-acetyl-alpha-D-glucosamine</name>
        <dbReference type="ChEBI" id="CHEBI:57705"/>
    </ligand>
</feature>
<feature type="binding site" evidence="1">
    <location>
        <position position="107"/>
    </location>
    <ligand>
        <name>Mg(2+)</name>
        <dbReference type="ChEBI" id="CHEBI:18420"/>
    </ligand>
</feature>
<feature type="binding site" evidence="1">
    <location>
        <position position="142"/>
    </location>
    <ligand>
        <name>UDP-N-acetyl-alpha-D-glucosamine</name>
        <dbReference type="ChEBI" id="CHEBI:57705"/>
    </ligand>
</feature>
<feature type="binding site" evidence="1">
    <location>
        <position position="156"/>
    </location>
    <ligand>
        <name>UDP-N-acetyl-alpha-D-glucosamine</name>
        <dbReference type="ChEBI" id="CHEBI:57705"/>
    </ligand>
</feature>
<feature type="binding site" evidence="1">
    <location>
        <position position="171"/>
    </location>
    <ligand>
        <name>UDP-N-acetyl-alpha-D-glucosamine</name>
        <dbReference type="ChEBI" id="CHEBI:57705"/>
    </ligand>
</feature>
<feature type="binding site" evidence="1">
    <location>
        <position position="229"/>
    </location>
    <ligand>
        <name>Mg(2+)</name>
        <dbReference type="ChEBI" id="CHEBI:18420"/>
    </ligand>
</feature>
<feature type="binding site" evidence="1">
    <location>
        <position position="229"/>
    </location>
    <ligand>
        <name>UDP-N-acetyl-alpha-D-glucosamine</name>
        <dbReference type="ChEBI" id="CHEBI:57705"/>
    </ligand>
</feature>
<feature type="binding site" evidence="1">
    <location>
        <position position="335"/>
    </location>
    <ligand>
        <name>UDP-N-acetyl-alpha-D-glucosamine</name>
        <dbReference type="ChEBI" id="CHEBI:57705"/>
    </ligand>
</feature>
<feature type="binding site" evidence="1">
    <location>
        <position position="353"/>
    </location>
    <ligand>
        <name>UDP-N-acetyl-alpha-D-glucosamine</name>
        <dbReference type="ChEBI" id="CHEBI:57705"/>
    </ligand>
</feature>
<feature type="binding site" evidence="1">
    <location>
        <position position="368"/>
    </location>
    <ligand>
        <name>UDP-N-acetyl-alpha-D-glucosamine</name>
        <dbReference type="ChEBI" id="CHEBI:57705"/>
    </ligand>
</feature>
<feature type="binding site" evidence="1">
    <location>
        <position position="379"/>
    </location>
    <ligand>
        <name>UDP-N-acetyl-alpha-D-glucosamine</name>
        <dbReference type="ChEBI" id="CHEBI:57705"/>
    </ligand>
</feature>
<feature type="binding site" evidence="1">
    <location>
        <position position="382"/>
    </location>
    <ligand>
        <name>acetyl-CoA</name>
        <dbReference type="ChEBI" id="CHEBI:57288"/>
    </ligand>
</feature>
<feature type="binding site" evidence="1">
    <location>
        <begin position="388"/>
        <end position="389"/>
    </location>
    <ligand>
        <name>acetyl-CoA</name>
        <dbReference type="ChEBI" id="CHEBI:57288"/>
    </ligand>
</feature>
<feature type="binding site" evidence="1">
    <location>
        <position position="407"/>
    </location>
    <ligand>
        <name>acetyl-CoA</name>
        <dbReference type="ChEBI" id="CHEBI:57288"/>
    </ligand>
</feature>
<feature type="binding site" evidence="1">
    <location>
        <position position="425"/>
    </location>
    <ligand>
        <name>acetyl-CoA</name>
        <dbReference type="ChEBI" id="CHEBI:57288"/>
    </ligand>
</feature>
<feature type="binding site" evidence="1">
    <location>
        <position position="442"/>
    </location>
    <ligand>
        <name>acetyl-CoA</name>
        <dbReference type="ChEBI" id="CHEBI:57288"/>
    </ligand>
</feature>
<proteinExistence type="inferred from homology"/>
<accession>Q2NQ84</accession>